<name>CXP6_PARCG</name>
<protein>
    <recommendedName>
        <fullName evidence="3">Parbolysin P6</fullName>
    </recommendedName>
    <alternativeName>
        <fullName>Parbolysin 6</fullName>
    </alternativeName>
</protein>
<evidence type="ECO:0000250" key="1">
    <source>
        <dbReference type="UniProtKB" id="A0A0N7HUN6"/>
    </source>
</evidence>
<evidence type="ECO:0000250" key="2">
    <source>
        <dbReference type="UniProtKB" id="P01527"/>
    </source>
</evidence>
<evidence type="ECO:0000303" key="3">
    <source>
    </source>
</evidence>
<evidence type="ECO:0000305" key="4"/>
<evidence type="ECO:0000305" key="5">
    <source>
    </source>
</evidence>
<evidence type="ECO:0000312" key="6">
    <source>
        <dbReference type="EMBL" id="ALI86910.1"/>
    </source>
</evidence>
<organism>
    <name type="scientific">Parborlasia corrugatus</name>
    <name type="common">Antarctic nemertean worm</name>
    <dbReference type="NCBI Taxonomy" id="187802"/>
    <lineage>
        <taxon>Eukaryota</taxon>
        <taxon>Metazoa</taxon>
        <taxon>Spiralia</taxon>
        <taxon>Lophotrochozoa</taxon>
        <taxon>Nemertea</taxon>
        <taxon>Pilidiophora</taxon>
        <taxon>Heteronemertea</taxon>
        <taxon>Lineidae</taxon>
        <taxon>Parborlasia</taxon>
    </lineage>
</organism>
<accession>A0A0P0BUQ6</accession>
<comment type="function">
    <text evidence="1">Cytolysin that shows hemolytic activity (on bovine erythrocytes, HC(50)=5.75 mg/ml). This hemolytic activity is completely inhibited by small unilamelar vesicles composed of PC/PG, PC/PI and PC/PS in 1:1 molar ratios (with at least 100 mg/ml concentration).</text>
</comment>
<comment type="subcellular location">
    <subcellularLocation>
        <location evidence="5">Secreted</location>
    </subcellularLocation>
</comment>
<comment type="tissue specificity">
    <text evidence="5">Localized within the skin and proboscis and are most readily isolated from body mucus secretions.</text>
</comment>
<comment type="similarity">
    <text evidence="4">Belongs to the worm cytolysin family.</text>
</comment>
<dbReference type="EMBL" id="KT693319">
    <property type="protein sequence ID" value="ALI86910.1"/>
    <property type="molecule type" value="mRNA"/>
</dbReference>
<dbReference type="SMR" id="A0A0P0BUQ6"/>
<dbReference type="GO" id="GO:0005576">
    <property type="term" value="C:extracellular region"/>
    <property type="evidence" value="ECO:0007669"/>
    <property type="project" value="UniProtKB-SubCell"/>
</dbReference>
<dbReference type="GO" id="GO:0090729">
    <property type="term" value="F:toxin activity"/>
    <property type="evidence" value="ECO:0007669"/>
    <property type="project" value="UniProtKB-KW"/>
</dbReference>
<dbReference type="GO" id="GO:0031640">
    <property type="term" value="P:killing of cells of another organism"/>
    <property type="evidence" value="ECO:0007669"/>
    <property type="project" value="UniProtKB-KW"/>
</dbReference>
<feature type="chain" id="PRO_0000454514" description="Parbolysin P6" evidence="5">
    <location>
        <begin position="1"/>
        <end position="91"/>
    </location>
</feature>
<feature type="disulfide bond" evidence="2">
    <location>
        <begin position="16"/>
        <end position="37"/>
    </location>
</feature>
<feature type="disulfide bond" evidence="2">
    <location>
        <begin position="22"/>
        <end position="33"/>
    </location>
</feature>
<feature type="disulfide bond" evidence="2">
    <location>
        <begin position="47"/>
        <end position="60"/>
    </location>
</feature>
<proteinExistence type="inferred from homology"/>
<keyword id="KW-0204">Cytolysis</keyword>
<keyword id="KW-1015">Disulfide bond</keyword>
<keyword id="KW-0354">Hemolysis</keyword>
<keyword id="KW-0964">Secreted</keyword>
<keyword id="KW-0800">Toxin</keyword>
<reference evidence="6" key="1">
    <citation type="journal article" date="2015" name="Toxicon">
        <title>Recombinant expression and predicted structure of parborlysin, a cytolytic protein from the Antarctic heteronemertine Parborlasia corrugatus.</title>
        <authorList>
            <person name="Butala M."/>
            <person name="Sega D."/>
            <person name="Tomc B."/>
            <person name="Podlesek Z."/>
            <person name="Kem W.R."/>
            <person name="Kupper F.C."/>
            <person name="Turk T."/>
        </authorList>
    </citation>
    <scope>NUCLEOTIDE SEQUENCE [MRNA]</scope>
</reference>
<sequence>GWPAYPGSNGIRSSVCQKKLGCGSKNLASLGVCKAFCLGRKRFWQKCGKNGSSGKGSRICNPVLAHAVEKAGKGLIKVTDMAVATIIKFAG</sequence>